<keyword id="KW-0028">Amino-acid biosynthesis</keyword>
<keyword id="KW-0170">Cobalt</keyword>
<keyword id="KW-0220">Diaminopimelate biosynthesis</keyword>
<keyword id="KW-0378">Hydrolase</keyword>
<keyword id="KW-0457">Lysine biosynthesis</keyword>
<keyword id="KW-0479">Metal-binding</keyword>
<keyword id="KW-1185">Reference proteome</keyword>
<keyword id="KW-0862">Zinc</keyword>
<gene>
    <name evidence="1" type="primary">dapE</name>
    <name type="ordered locus">Xaut_2093</name>
</gene>
<protein>
    <recommendedName>
        <fullName evidence="1">Succinyl-diaminopimelate desuccinylase</fullName>
        <shortName evidence="1">SDAP desuccinylase</shortName>
        <ecNumber evidence="1">3.5.1.18</ecNumber>
    </recommendedName>
    <alternativeName>
        <fullName evidence="1">N-succinyl-LL-2,6-diaminoheptanedioate amidohydrolase</fullName>
    </alternativeName>
</protein>
<reference key="1">
    <citation type="submission" date="2007-07" db="EMBL/GenBank/DDBJ databases">
        <title>Complete sequence of chromosome of Xanthobacter autotrophicus Py2.</title>
        <authorList>
            <consortium name="US DOE Joint Genome Institute"/>
            <person name="Copeland A."/>
            <person name="Lucas S."/>
            <person name="Lapidus A."/>
            <person name="Barry K."/>
            <person name="Glavina del Rio T."/>
            <person name="Hammon N."/>
            <person name="Israni S."/>
            <person name="Dalin E."/>
            <person name="Tice H."/>
            <person name="Pitluck S."/>
            <person name="Sims D."/>
            <person name="Brettin T."/>
            <person name="Bruce D."/>
            <person name="Detter J.C."/>
            <person name="Han C."/>
            <person name="Tapia R."/>
            <person name="Brainard J."/>
            <person name="Schmutz J."/>
            <person name="Larimer F."/>
            <person name="Land M."/>
            <person name="Hauser L."/>
            <person name="Kyrpides N."/>
            <person name="Kim E."/>
            <person name="Ensigns S.A."/>
            <person name="Richardson P."/>
        </authorList>
    </citation>
    <scope>NUCLEOTIDE SEQUENCE [LARGE SCALE GENOMIC DNA]</scope>
    <source>
        <strain>ATCC BAA-1158 / Py2</strain>
    </source>
</reference>
<evidence type="ECO:0000255" key="1">
    <source>
        <dbReference type="HAMAP-Rule" id="MF_01690"/>
    </source>
</evidence>
<evidence type="ECO:0000305" key="2"/>
<proteinExistence type="inferred from homology"/>
<accession>A7IH44</accession>
<comment type="function">
    <text evidence="1">Catalyzes the hydrolysis of N-succinyl-L,L-diaminopimelic acid (SDAP), forming succinate and LL-2,6-diaminopimelate (DAP), an intermediate involved in the bacterial biosynthesis of lysine and meso-diaminopimelic acid, an essential component of bacterial cell walls.</text>
</comment>
<comment type="catalytic activity">
    <reaction evidence="1">
        <text>N-succinyl-(2S,6S)-2,6-diaminopimelate + H2O = (2S,6S)-2,6-diaminopimelate + succinate</text>
        <dbReference type="Rhea" id="RHEA:22608"/>
        <dbReference type="ChEBI" id="CHEBI:15377"/>
        <dbReference type="ChEBI" id="CHEBI:30031"/>
        <dbReference type="ChEBI" id="CHEBI:57609"/>
        <dbReference type="ChEBI" id="CHEBI:58087"/>
        <dbReference type="EC" id="3.5.1.18"/>
    </reaction>
</comment>
<comment type="cofactor">
    <cofactor evidence="1">
        <name>Zn(2+)</name>
        <dbReference type="ChEBI" id="CHEBI:29105"/>
    </cofactor>
    <cofactor evidence="1">
        <name>Co(2+)</name>
        <dbReference type="ChEBI" id="CHEBI:48828"/>
    </cofactor>
    <text evidence="1">Binds 2 Zn(2+) or Co(2+) ions per subunit.</text>
</comment>
<comment type="pathway">
    <text evidence="1">Amino-acid biosynthesis; L-lysine biosynthesis via DAP pathway; LL-2,6-diaminopimelate from (S)-tetrahydrodipicolinate (succinylase route): step 3/3.</text>
</comment>
<comment type="subunit">
    <text evidence="1">Homodimer.</text>
</comment>
<comment type="similarity">
    <text evidence="1">Belongs to the peptidase M20A family. DapE subfamily.</text>
</comment>
<comment type="sequence caution" evidence="2">
    <conflict type="erroneous initiation">
        <sequence resource="EMBL-CDS" id="ABS67337"/>
    </conflict>
</comment>
<feature type="chain" id="PRO_0000375780" description="Succinyl-diaminopimelate desuccinylase">
    <location>
        <begin position="1"/>
        <end position="375"/>
    </location>
</feature>
<feature type="active site" evidence="1">
    <location>
        <position position="68"/>
    </location>
</feature>
<feature type="active site" description="Proton acceptor" evidence="1">
    <location>
        <position position="130"/>
    </location>
</feature>
<feature type="binding site" evidence="1">
    <location>
        <position position="66"/>
    </location>
    <ligand>
        <name>Zn(2+)</name>
        <dbReference type="ChEBI" id="CHEBI:29105"/>
        <label>1</label>
    </ligand>
</feature>
<feature type="binding site" evidence="1">
    <location>
        <position position="99"/>
    </location>
    <ligand>
        <name>Zn(2+)</name>
        <dbReference type="ChEBI" id="CHEBI:29105"/>
        <label>1</label>
    </ligand>
</feature>
<feature type="binding site" evidence="1">
    <location>
        <position position="99"/>
    </location>
    <ligand>
        <name>Zn(2+)</name>
        <dbReference type="ChEBI" id="CHEBI:29105"/>
        <label>2</label>
    </ligand>
</feature>
<feature type="binding site" evidence="1">
    <location>
        <position position="131"/>
    </location>
    <ligand>
        <name>Zn(2+)</name>
        <dbReference type="ChEBI" id="CHEBI:29105"/>
        <label>2</label>
    </ligand>
</feature>
<feature type="binding site" evidence="1">
    <location>
        <position position="159"/>
    </location>
    <ligand>
        <name>Zn(2+)</name>
        <dbReference type="ChEBI" id="CHEBI:29105"/>
        <label>1</label>
    </ligand>
</feature>
<feature type="binding site" evidence="1">
    <location>
        <position position="345"/>
    </location>
    <ligand>
        <name>Zn(2+)</name>
        <dbReference type="ChEBI" id="CHEBI:29105"/>
        <label>2</label>
    </ligand>
</feature>
<name>DAPE_XANP2</name>
<organism>
    <name type="scientific">Xanthobacter autotrophicus (strain ATCC BAA-1158 / Py2)</name>
    <dbReference type="NCBI Taxonomy" id="78245"/>
    <lineage>
        <taxon>Bacteria</taxon>
        <taxon>Pseudomonadati</taxon>
        <taxon>Pseudomonadota</taxon>
        <taxon>Alphaproteobacteria</taxon>
        <taxon>Hyphomicrobiales</taxon>
        <taxon>Xanthobacteraceae</taxon>
        <taxon>Xanthobacter</taxon>
    </lineage>
</organism>
<dbReference type="EC" id="3.5.1.18" evidence="1"/>
<dbReference type="EMBL" id="CP000781">
    <property type="protein sequence ID" value="ABS67337.1"/>
    <property type="status" value="ALT_INIT"/>
    <property type="molecule type" value="Genomic_DNA"/>
</dbReference>
<dbReference type="SMR" id="A7IH44"/>
<dbReference type="STRING" id="78245.Xaut_2093"/>
<dbReference type="MEROPS" id="M20.010"/>
<dbReference type="KEGG" id="xau:Xaut_2093"/>
<dbReference type="eggNOG" id="COG0624">
    <property type="taxonomic scope" value="Bacteria"/>
</dbReference>
<dbReference type="HOGENOM" id="CLU_021802_4_0_5"/>
<dbReference type="UniPathway" id="UPA00034">
    <property type="reaction ID" value="UER00021"/>
</dbReference>
<dbReference type="Proteomes" id="UP000002417">
    <property type="component" value="Chromosome"/>
</dbReference>
<dbReference type="GO" id="GO:0008777">
    <property type="term" value="F:acetylornithine deacetylase activity"/>
    <property type="evidence" value="ECO:0007669"/>
    <property type="project" value="TreeGrafter"/>
</dbReference>
<dbReference type="GO" id="GO:0050897">
    <property type="term" value="F:cobalt ion binding"/>
    <property type="evidence" value="ECO:0007669"/>
    <property type="project" value="UniProtKB-UniRule"/>
</dbReference>
<dbReference type="GO" id="GO:0009014">
    <property type="term" value="F:succinyl-diaminopimelate desuccinylase activity"/>
    <property type="evidence" value="ECO:0007669"/>
    <property type="project" value="UniProtKB-UniRule"/>
</dbReference>
<dbReference type="GO" id="GO:0008270">
    <property type="term" value="F:zinc ion binding"/>
    <property type="evidence" value="ECO:0007669"/>
    <property type="project" value="UniProtKB-UniRule"/>
</dbReference>
<dbReference type="GO" id="GO:0019877">
    <property type="term" value="P:diaminopimelate biosynthetic process"/>
    <property type="evidence" value="ECO:0007669"/>
    <property type="project" value="UniProtKB-UniRule"/>
</dbReference>
<dbReference type="GO" id="GO:0006526">
    <property type="term" value="P:L-arginine biosynthetic process"/>
    <property type="evidence" value="ECO:0007669"/>
    <property type="project" value="TreeGrafter"/>
</dbReference>
<dbReference type="GO" id="GO:0009089">
    <property type="term" value="P:lysine biosynthetic process via diaminopimelate"/>
    <property type="evidence" value="ECO:0007669"/>
    <property type="project" value="UniProtKB-UniRule"/>
</dbReference>
<dbReference type="CDD" id="cd03891">
    <property type="entry name" value="M20_DapE_proteobac"/>
    <property type="match status" value="1"/>
</dbReference>
<dbReference type="Gene3D" id="3.40.630.10">
    <property type="entry name" value="Zn peptidases"/>
    <property type="match status" value="2"/>
</dbReference>
<dbReference type="HAMAP" id="MF_01690">
    <property type="entry name" value="DapE"/>
    <property type="match status" value="1"/>
</dbReference>
<dbReference type="InterPro" id="IPR001261">
    <property type="entry name" value="ArgE/DapE_CS"/>
</dbReference>
<dbReference type="InterPro" id="IPR036264">
    <property type="entry name" value="Bact_exopeptidase_dim_dom"/>
</dbReference>
<dbReference type="InterPro" id="IPR005941">
    <property type="entry name" value="DapE_proteobac"/>
</dbReference>
<dbReference type="InterPro" id="IPR002933">
    <property type="entry name" value="Peptidase_M20"/>
</dbReference>
<dbReference type="InterPro" id="IPR011650">
    <property type="entry name" value="Peptidase_M20_dimer"/>
</dbReference>
<dbReference type="InterPro" id="IPR050072">
    <property type="entry name" value="Peptidase_M20A"/>
</dbReference>
<dbReference type="NCBIfam" id="TIGR01246">
    <property type="entry name" value="dapE_proteo"/>
    <property type="match status" value="1"/>
</dbReference>
<dbReference type="NCBIfam" id="NF009557">
    <property type="entry name" value="PRK13009.1"/>
    <property type="match status" value="1"/>
</dbReference>
<dbReference type="PANTHER" id="PTHR43808">
    <property type="entry name" value="ACETYLORNITHINE DEACETYLASE"/>
    <property type="match status" value="1"/>
</dbReference>
<dbReference type="PANTHER" id="PTHR43808:SF31">
    <property type="entry name" value="N-ACETYL-L-CITRULLINE DEACETYLASE"/>
    <property type="match status" value="1"/>
</dbReference>
<dbReference type="Pfam" id="PF07687">
    <property type="entry name" value="M20_dimer"/>
    <property type="match status" value="1"/>
</dbReference>
<dbReference type="Pfam" id="PF01546">
    <property type="entry name" value="Peptidase_M20"/>
    <property type="match status" value="1"/>
</dbReference>
<dbReference type="SUPFAM" id="SSF55031">
    <property type="entry name" value="Bacterial exopeptidase dimerisation domain"/>
    <property type="match status" value="1"/>
</dbReference>
<dbReference type="SUPFAM" id="SSF53187">
    <property type="entry name" value="Zn-dependent exopeptidases"/>
    <property type="match status" value="1"/>
</dbReference>
<dbReference type="PROSITE" id="PS00759">
    <property type="entry name" value="ARGE_DAPE_CPG2_2"/>
    <property type="match status" value="1"/>
</dbReference>
<sequence length="375" mass="39788">MALAAELIRAPSVTPHADDALELVAKRLEAAGYRVERLTFETGGVPIPNLYARIGTDGPNLCFAGHVDVVPEGDATQWHHAPFAGTVEDGVLHGRGAVDMKGAVAAFLAAALAFGRPQRGSLSFLITGDEEGPALDGTVKVVEWLKARGETIDHCVLGEPTNPDALGDAFKVGRRGSLSGILTVKGVQGHVAYPHLADNPIPRLLKLIGDLTAAPLDHGSDFFPPSNLEVVSVDVGNPVFNLIPAQATARFNVRFNDLFSLESLKSEIIRRLDGAGLTYDLAFQTGASQSFLTAPGPFTDLVASAVEEVTGRRPEPSTSGGTSDARFIKDICPVVEFGLVGRTMHKVDEATPVKDIEALTAIYGRIIARYFSTFA</sequence>